<sequence>MTWPLPDRLSINSLSGTPAVDLSSFTDFLRRQAPELLPASISGGAPLAGGDAQLPHGTTIVALKYPGGVVMAGDRRSTQGNMISGRDVRKVYITDDYTATGIAGTAAVAVEFARLYAVELEHYEKLEGVPLTFAGKINRLAIMVRGNLAAAMQGLLALPLLAGYDIHASDPQSAGRIVSFDAAGGWNIEEEGYQAVGSGSLFAKSSMKKLYSQVTDGDSGLRVAVEALYDAADDDSATGGPDLVRGIFPTAVIIDADGAVDVPESRIAELARAIIESRSGADTFGSDGGEK</sequence>
<dbReference type="EC" id="3.4.25.1" evidence="1"/>
<dbReference type="EMBL" id="AM408590">
    <property type="protein sequence ID" value="CAL72115.1"/>
    <property type="molecule type" value="Genomic_DNA"/>
</dbReference>
<dbReference type="RefSeq" id="WP_003411023.1">
    <property type="nucleotide sequence ID" value="NC_008769.1"/>
</dbReference>
<dbReference type="SMR" id="A1KKF3"/>
<dbReference type="MEROPS" id="T01.005"/>
<dbReference type="KEGG" id="mbb:BCG_2127c"/>
<dbReference type="HOGENOM" id="CLU_035750_2_0_11"/>
<dbReference type="UniPathway" id="UPA00997"/>
<dbReference type="Proteomes" id="UP000001472">
    <property type="component" value="Chromosome"/>
</dbReference>
<dbReference type="GO" id="GO:0005737">
    <property type="term" value="C:cytoplasm"/>
    <property type="evidence" value="ECO:0007669"/>
    <property type="project" value="UniProtKB-SubCell"/>
</dbReference>
<dbReference type="GO" id="GO:0019774">
    <property type="term" value="C:proteasome core complex, beta-subunit complex"/>
    <property type="evidence" value="ECO:0007669"/>
    <property type="project" value="UniProtKB-UniRule"/>
</dbReference>
<dbReference type="GO" id="GO:0004298">
    <property type="term" value="F:threonine-type endopeptidase activity"/>
    <property type="evidence" value="ECO:0007669"/>
    <property type="project" value="UniProtKB-UniRule"/>
</dbReference>
<dbReference type="GO" id="GO:0019941">
    <property type="term" value="P:modification-dependent protein catabolic process"/>
    <property type="evidence" value="ECO:0007669"/>
    <property type="project" value="UniProtKB-UniRule"/>
</dbReference>
<dbReference type="GO" id="GO:0010498">
    <property type="term" value="P:proteasomal protein catabolic process"/>
    <property type="evidence" value="ECO:0007669"/>
    <property type="project" value="UniProtKB-UniRule"/>
</dbReference>
<dbReference type="CDD" id="cd01906">
    <property type="entry name" value="proteasome_protease_HslV"/>
    <property type="match status" value="1"/>
</dbReference>
<dbReference type="FunFam" id="3.60.20.10:FF:000046">
    <property type="entry name" value="Proteasome subunit beta"/>
    <property type="match status" value="1"/>
</dbReference>
<dbReference type="Gene3D" id="3.60.20.10">
    <property type="entry name" value="Glutamine Phosphoribosylpyrophosphate, subunit 1, domain 1"/>
    <property type="match status" value="1"/>
</dbReference>
<dbReference type="HAMAP" id="MF_02113_B">
    <property type="entry name" value="Proteasome_B_B"/>
    <property type="match status" value="1"/>
</dbReference>
<dbReference type="InterPro" id="IPR029055">
    <property type="entry name" value="Ntn_hydrolases_N"/>
</dbReference>
<dbReference type="InterPro" id="IPR001353">
    <property type="entry name" value="Proteasome_sua/b"/>
</dbReference>
<dbReference type="InterPro" id="IPR023333">
    <property type="entry name" value="Proteasome_suB-type"/>
</dbReference>
<dbReference type="InterPro" id="IPR022483">
    <property type="entry name" value="PSB_actinobac"/>
</dbReference>
<dbReference type="NCBIfam" id="TIGR03690">
    <property type="entry name" value="20S_bact_beta"/>
    <property type="match status" value="1"/>
</dbReference>
<dbReference type="PANTHER" id="PTHR32194:SF0">
    <property type="entry name" value="ATP-DEPENDENT PROTEASE SUBUNIT HSLV"/>
    <property type="match status" value="1"/>
</dbReference>
<dbReference type="PANTHER" id="PTHR32194">
    <property type="entry name" value="METALLOPROTEASE TLDD"/>
    <property type="match status" value="1"/>
</dbReference>
<dbReference type="Pfam" id="PF00227">
    <property type="entry name" value="Proteasome"/>
    <property type="match status" value="1"/>
</dbReference>
<dbReference type="SUPFAM" id="SSF56235">
    <property type="entry name" value="N-terminal nucleophile aminohydrolases (Ntn hydrolases)"/>
    <property type="match status" value="1"/>
</dbReference>
<dbReference type="PROSITE" id="PS51476">
    <property type="entry name" value="PROTEASOME_BETA_2"/>
    <property type="match status" value="1"/>
</dbReference>
<gene>
    <name evidence="1" type="primary">prcB</name>
    <name type="ordered locus">BCG_2127c</name>
</gene>
<protein>
    <recommendedName>
        <fullName evidence="1">Proteasome subunit beta</fullName>
        <ecNumber evidence="1">3.4.25.1</ecNumber>
    </recommendedName>
    <alternativeName>
        <fullName evidence="1">20S proteasome beta subunit</fullName>
    </alternativeName>
    <alternativeName>
        <fullName evidence="1">Proteasome core protein PrcB</fullName>
    </alternativeName>
</protein>
<organism>
    <name type="scientific">Mycobacterium bovis (strain BCG / Pasteur 1173P2)</name>
    <dbReference type="NCBI Taxonomy" id="410289"/>
    <lineage>
        <taxon>Bacteria</taxon>
        <taxon>Bacillati</taxon>
        <taxon>Actinomycetota</taxon>
        <taxon>Actinomycetes</taxon>
        <taxon>Mycobacteriales</taxon>
        <taxon>Mycobacteriaceae</taxon>
        <taxon>Mycobacterium</taxon>
        <taxon>Mycobacterium tuberculosis complex</taxon>
    </lineage>
</organism>
<comment type="function">
    <text evidence="1">Component of the proteasome core, a large protease complex with broad specificity involved in protein degradation.</text>
</comment>
<comment type="catalytic activity">
    <reaction evidence="1">
        <text>Cleavage of peptide bonds with very broad specificity.</text>
        <dbReference type="EC" id="3.4.25.1"/>
    </reaction>
</comment>
<comment type="activity regulation">
    <text evidence="1">The formation of the proteasomal ATPase ARC-20S proteasome complex, likely via the docking of the C-termini of ARC into the intersubunit pockets in the alpha-rings, may trigger opening of the gate for substrate entry. Interconversion between the open-gate and close-gate conformations leads to a dynamic regulation of the 20S proteasome proteolysis activity.</text>
</comment>
<comment type="pathway">
    <text evidence="1">Protein degradation; proteasomal Pup-dependent pathway.</text>
</comment>
<comment type="subunit">
    <text evidence="1">The 20S proteasome core is composed of 14 alpha and 14 beta subunits that assemble into four stacked heptameric rings, resulting in a barrel-shaped structure. The two inner rings, each composed of seven catalytic beta subunits, are sandwiched by two outer rings, each composed of seven alpha subunits. The catalytic chamber with the active sites is on the inside of the barrel. Has a gated structure, the ends of the cylinder being occluded by the N-termini of the alpha-subunits. Is capped by the proteasome-associated ATPase, ARC.</text>
</comment>
<comment type="subcellular location">
    <subcellularLocation>
        <location evidence="1">Cytoplasm</location>
    </subcellularLocation>
</comment>
<comment type="similarity">
    <text evidence="1">Belongs to the peptidase T1B family.</text>
</comment>
<keyword id="KW-0068">Autocatalytic cleavage</keyword>
<keyword id="KW-0963">Cytoplasm</keyword>
<keyword id="KW-0378">Hydrolase</keyword>
<keyword id="KW-0645">Protease</keyword>
<keyword id="KW-0647">Proteasome</keyword>
<keyword id="KW-0888">Threonine protease</keyword>
<keyword id="KW-0865">Zymogen</keyword>
<name>PSB_MYCBP</name>
<reference key="1">
    <citation type="journal article" date="2007" name="Proc. Natl. Acad. Sci. U.S.A.">
        <title>Genome plasticity of BCG and impact on vaccine efficacy.</title>
        <authorList>
            <person name="Brosch R."/>
            <person name="Gordon S.V."/>
            <person name="Garnier T."/>
            <person name="Eiglmeier K."/>
            <person name="Frigui W."/>
            <person name="Valenti P."/>
            <person name="Dos Santos S."/>
            <person name="Duthoy S."/>
            <person name="Lacroix C."/>
            <person name="Garcia-Pelayo C."/>
            <person name="Inwald J.K."/>
            <person name="Golby P."/>
            <person name="Garcia J.N."/>
            <person name="Hewinson R.G."/>
            <person name="Behr M.A."/>
            <person name="Quail M.A."/>
            <person name="Churcher C."/>
            <person name="Barrell B.G."/>
            <person name="Parkhill J."/>
            <person name="Cole S.T."/>
        </authorList>
    </citation>
    <scope>NUCLEOTIDE SEQUENCE [LARGE SCALE GENOMIC DNA]</scope>
    <source>
        <strain>BCG / Pasteur 1173P2</strain>
    </source>
</reference>
<accession>A1KKF3</accession>
<evidence type="ECO:0000255" key="1">
    <source>
        <dbReference type="HAMAP-Rule" id="MF_02113"/>
    </source>
</evidence>
<proteinExistence type="inferred from homology"/>
<feature type="propeptide" id="PRO_0000397526" description="Removed in mature form; by autocatalysis" evidence="1">
    <location>
        <begin position="1"/>
        <end position="57"/>
    </location>
</feature>
<feature type="chain" id="PRO_0000397527" description="Proteasome subunit beta">
    <location>
        <begin position="58"/>
        <end position="291"/>
    </location>
</feature>
<feature type="active site" description="Nucleophile" evidence="1">
    <location>
        <position position="58"/>
    </location>
</feature>